<comment type="function">
    <text evidence="1">DNA-dependent RNA polymerase (RNAP) catalyzes the transcription of DNA into RNA using the four ribonucleoside triphosphates as substrates.</text>
</comment>
<comment type="catalytic activity">
    <reaction evidence="1">
        <text>RNA(n) + a ribonucleoside 5'-triphosphate = RNA(n+1) + diphosphate</text>
        <dbReference type="Rhea" id="RHEA:21248"/>
        <dbReference type="Rhea" id="RHEA-COMP:14527"/>
        <dbReference type="Rhea" id="RHEA-COMP:17342"/>
        <dbReference type="ChEBI" id="CHEBI:33019"/>
        <dbReference type="ChEBI" id="CHEBI:61557"/>
        <dbReference type="ChEBI" id="CHEBI:140395"/>
        <dbReference type="EC" id="2.7.7.6"/>
    </reaction>
</comment>
<comment type="subunit">
    <text evidence="2 3 4">Part of the 13-subunit RNA polymerase complex.</text>
</comment>
<comment type="subcellular location">
    <subcellularLocation>
        <location evidence="1 4">Cytoplasm</location>
    </subcellularLocation>
</comment>
<comment type="similarity">
    <text evidence="1">Belongs to the archaeal Rpo11/eukaryotic RPB11/RPC19 RNA polymerase subunit family.</text>
</comment>
<reference evidence="7 8" key="1">
    <citation type="journal article" date="2009" name="PLoS Biol.">
        <title>Evolution of complex RNA polymerases: the complete archaeal RNA polymerase structure.</title>
        <authorList>
            <person name="Korkhin Y."/>
            <person name="Unligil U.M."/>
            <person name="Littlefield O."/>
            <person name="Nelson P.J."/>
            <person name="Stuart D.I."/>
            <person name="Sigler P.B."/>
            <person name="Bell S.D."/>
            <person name="Abrescia N.G."/>
        </authorList>
    </citation>
    <scope>NUCLEOTIDE SEQUENCE [GENOMIC DNA]</scope>
    <scope>X-RAY CRYSTALLOGRAPHY (3.35 ANGSTROMS) OF THE RNA POLYMERASE COMPLEX</scope>
    <scope>SUBUNIT</scope>
    <scope>NOMENCLATURE</scope>
    <source>
        <strain>ATCC 51178 / DSM 5389 / JCM 8931 / NBRC 15437 / B12</strain>
    </source>
</reference>
<reference evidence="6" key="2">
    <citation type="journal article" date="2021" name="Environ. Microbiol.">
        <title>New insights into the diversity and evolution of the archaeal mobilome from three complete genomes of Saccharolobus shibatae.</title>
        <authorList>
            <person name="Medvedeva S."/>
            <person name="Brandt D."/>
            <person name="Cvirkaite-Krupovic V."/>
            <person name="Liu Y."/>
            <person name="Severinov K."/>
            <person name="Ishino S."/>
            <person name="Ishino Y."/>
            <person name="Prangishvili D."/>
            <person name="Kalinowski J."/>
            <person name="Krupovic M."/>
        </authorList>
    </citation>
    <scope>NUCLEOTIDE SEQUENCE [LARGE SCALE GENOMIC DNA]</scope>
    <source>
        <strain>ATCC 51178 / DSM 5389 / JCM 8931 / NBRC 15437 / B12</strain>
    </source>
</reference>
<reference evidence="9" key="3">
    <citation type="journal article" date="2011" name="Biochem. Soc. Trans.">
        <title>Archaeal RNA polymerase: the influence of the protruding stalk in crystal packing and preliminary biophysical analysis of the Rpo13 subunit.</title>
        <authorList>
            <person name="Wojtas M."/>
            <person name="Peralta B."/>
            <person name="Ondiviela M."/>
            <person name="Mogni M."/>
            <person name="Bell S.D."/>
            <person name="Abrescia N.G."/>
        </authorList>
    </citation>
    <scope>X-RAY CRYSTALLOGRAPHY (3.80 ANGSTROMS) OF THE RNA POLYMERASE COMPLEX</scope>
    <scope>SUBUNIT</scope>
    <source>
        <strain>ATCC 51178 / DSM 5389 / JCM 8931 / NBRC 15437 / B12</strain>
    </source>
</reference>
<reference evidence="10 11" key="4">
    <citation type="journal article" date="2012" name="Nucleic Acids Res.">
        <title>Structural and functional analyses of the interaction of archaeal RNA polymerase with DNA.</title>
        <authorList>
            <person name="Wojtas M.N."/>
            <person name="Mogni M."/>
            <person name="Millet O."/>
            <person name="Bell S.D."/>
            <person name="Abrescia N.G."/>
        </authorList>
    </citation>
    <scope>X-RAY CRYSTALLOGRAPHY (3.20 ANGSTROMS) OF THE RNA POLYMERASE COMPLEX WITH AND WITHOUT DNA</scope>
    <scope>SUBUNIT</scope>
    <scope>SUBCELLULAR LOCATION</scope>
    <source>
        <strain>ATCC 51178 / DSM 5389 / JCM 8931 / NBRC 15437 / B12</strain>
    </source>
</reference>
<name>RPO11_SACSH</name>
<sequence>MEIKILKSESNYLELEIEGEDHTLGNLIAGTLRKISGVSFASYYQPHPLTDKIIVKILTDGSIAPKDALLKAIETVRVMASHYIDEIKGLTK</sequence>
<dbReference type="EC" id="2.7.7.6" evidence="1"/>
<dbReference type="EMBL" id="FJ515674">
    <property type="protein sequence ID" value="ACL36497.1"/>
    <property type="molecule type" value="Genomic_DNA"/>
</dbReference>
<dbReference type="EMBL" id="CP077717">
    <property type="protein sequence ID" value="QXJ30248.1"/>
    <property type="molecule type" value="Genomic_DNA"/>
</dbReference>
<dbReference type="RefSeq" id="WP_218258902.1">
    <property type="nucleotide sequence ID" value="NZ_CP077717.1"/>
</dbReference>
<dbReference type="PDB" id="2WAQ">
    <property type="method" value="X-ray"/>
    <property type="resolution" value="3.35 A"/>
    <property type="chains" value="L=1-92"/>
</dbReference>
<dbReference type="PDB" id="2WB1">
    <property type="method" value="X-ray"/>
    <property type="resolution" value="3.52 A"/>
    <property type="chains" value="L/M=1-92"/>
</dbReference>
<dbReference type="PDB" id="2Y0S">
    <property type="method" value="X-ray"/>
    <property type="resolution" value="3.80 A"/>
    <property type="chains" value="L/M=1-92"/>
</dbReference>
<dbReference type="PDB" id="4AYB">
    <property type="method" value="X-ray"/>
    <property type="resolution" value="3.20 A"/>
    <property type="chains" value="L=1-92"/>
</dbReference>
<dbReference type="PDB" id="4V8S">
    <property type="method" value="X-ray"/>
    <property type="resolution" value="4.32 A"/>
    <property type="chains" value="AM/BL=1-92"/>
</dbReference>
<dbReference type="PDBsum" id="2WAQ"/>
<dbReference type="PDBsum" id="2WB1"/>
<dbReference type="PDBsum" id="2Y0S"/>
<dbReference type="PDBsum" id="4AYB"/>
<dbReference type="PDBsum" id="4V8S"/>
<dbReference type="SMR" id="B8YB62"/>
<dbReference type="GeneID" id="65564620"/>
<dbReference type="KEGG" id="sshi:J5U23_03144"/>
<dbReference type="OrthoDB" id="24205at2157"/>
<dbReference type="BRENDA" id="2.7.7.6">
    <property type="organism ID" value="6162"/>
</dbReference>
<dbReference type="EvolutionaryTrace" id="B8YB62"/>
<dbReference type="Proteomes" id="UP000694018">
    <property type="component" value="Chromosome"/>
</dbReference>
<dbReference type="GO" id="GO:0005737">
    <property type="term" value="C:cytoplasm"/>
    <property type="evidence" value="ECO:0007669"/>
    <property type="project" value="UniProtKB-SubCell"/>
</dbReference>
<dbReference type="GO" id="GO:0000428">
    <property type="term" value="C:DNA-directed RNA polymerase complex"/>
    <property type="evidence" value="ECO:0000314"/>
    <property type="project" value="UniProtKB"/>
</dbReference>
<dbReference type="GO" id="GO:0003677">
    <property type="term" value="F:DNA binding"/>
    <property type="evidence" value="ECO:0007669"/>
    <property type="project" value="InterPro"/>
</dbReference>
<dbReference type="GO" id="GO:0003899">
    <property type="term" value="F:DNA-directed RNA polymerase activity"/>
    <property type="evidence" value="ECO:0007669"/>
    <property type="project" value="UniProtKB-UniRule"/>
</dbReference>
<dbReference type="GO" id="GO:0046983">
    <property type="term" value="F:protein dimerization activity"/>
    <property type="evidence" value="ECO:0007669"/>
    <property type="project" value="InterPro"/>
</dbReference>
<dbReference type="GO" id="GO:0006351">
    <property type="term" value="P:DNA-templated transcription"/>
    <property type="evidence" value="ECO:0007669"/>
    <property type="project" value="UniProtKB-UniRule"/>
</dbReference>
<dbReference type="Gene3D" id="3.30.1360.10">
    <property type="entry name" value="RNA polymerase, RBP11-like subunit"/>
    <property type="match status" value="1"/>
</dbReference>
<dbReference type="HAMAP" id="MF_00261">
    <property type="entry name" value="RNApol_arch_Rpo11"/>
    <property type="match status" value="1"/>
</dbReference>
<dbReference type="InterPro" id="IPR036603">
    <property type="entry name" value="RBP11-like"/>
</dbReference>
<dbReference type="InterPro" id="IPR009025">
    <property type="entry name" value="RBP11-like_dimer"/>
</dbReference>
<dbReference type="InterPro" id="IPR008193">
    <property type="entry name" value="RNA_pol_Rpb11_13-16kDa_CS"/>
</dbReference>
<dbReference type="InterPro" id="IPR022905">
    <property type="entry name" value="Rpo11-like"/>
</dbReference>
<dbReference type="NCBIfam" id="NF002233">
    <property type="entry name" value="PRK01146.1-1"/>
    <property type="match status" value="1"/>
</dbReference>
<dbReference type="PANTHER" id="PTHR13946">
    <property type="entry name" value="DNA-DIRECTED RNA POLYMERASE I,II,III"/>
    <property type="match status" value="1"/>
</dbReference>
<dbReference type="PANTHER" id="PTHR13946:SF28">
    <property type="entry name" value="DNA-DIRECTED RNA POLYMERASES I AND III SUBUNIT RPAC2"/>
    <property type="match status" value="1"/>
</dbReference>
<dbReference type="Pfam" id="PF13656">
    <property type="entry name" value="RNA_pol_L_2"/>
    <property type="match status" value="1"/>
</dbReference>
<dbReference type="SUPFAM" id="SSF55257">
    <property type="entry name" value="RBP11-like subunits of RNA polymerase"/>
    <property type="match status" value="1"/>
</dbReference>
<dbReference type="PROSITE" id="PS01154">
    <property type="entry name" value="RNA_POL_L_13KD"/>
    <property type="match status" value="1"/>
</dbReference>
<organism>
    <name type="scientific">Saccharolobus shibatae (strain ATCC 51178 / DSM 5389 / JCM 8931 / NBRC 15437 / B12)</name>
    <name type="common">Sulfolobus shibatae</name>
    <dbReference type="NCBI Taxonomy" id="523848"/>
    <lineage>
        <taxon>Archaea</taxon>
        <taxon>Thermoproteota</taxon>
        <taxon>Thermoprotei</taxon>
        <taxon>Sulfolobales</taxon>
        <taxon>Sulfolobaceae</taxon>
        <taxon>Saccharolobus</taxon>
    </lineage>
</organism>
<gene>
    <name evidence="1 5" type="primary">rpo11</name>
    <name evidence="1" type="synonym">rpoL</name>
    <name evidence="6" type="ORF">J5U23_03144</name>
</gene>
<proteinExistence type="evidence at protein level"/>
<protein>
    <recommendedName>
        <fullName evidence="1 5">DNA-directed RNA polymerase subunit Rpo11</fullName>
        <ecNumber evidence="1">2.7.7.6</ecNumber>
    </recommendedName>
    <alternativeName>
        <fullName evidence="1">DNA-directed RNA polymerase subunit L</fullName>
    </alternativeName>
</protein>
<evidence type="ECO:0000255" key="1">
    <source>
        <dbReference type="HAMAP-Rule" id="MF_00261"/>
    </source>
</evidence>
<evidence type="ECO:0000269" key="2">
    <source>
    </source>
</evidence>
<evidence type="ECO:0000269" key="3">
    <source>
    </source>
</evidence>
<evidence type="ECO:0000269" key="4">
    <source>
    </source>
</evidence>
<evidence type="ECO:0000303" key="5">
    <source>
    </source>
</evidence>
<evidence type="ECO:0000312" key="6">
    <source>
        <dbReference type="EMBL" id="QXJ30248.1"/>
    </source>
</evidence>
<evidence type="ECO:0007744" key="7">
    <source>
        <dbReference type="PDB" id="2WAQ"/>
    </source>
</evidence>
<evidence type="ECO:0007744" key="8">
    <source>
        <dbReference type="PDB" id="2WB1"/>
    </source>
</evidence>
<evidence type="ECO:0007744" key="9">
    <source>
        <dbReference type="PDB" id="2Y0S"/>
    </source>
</evidence>
<evidence type="ECO:0007744" key="10">
    <source>
        <dbReference type="PDB" id="4AYB"/>
    </source>
</evidence>
<evidence type="ECO:0007744" key="11">
    <source>
        <dbReference type="PDB" id="4V8S"/>
    </source>
</evidence>
<evidence type="ECO:0007829" key="12">
    <source>
        <dbReference type="PDB" id="2WAQ"/>
    </source>
</evidence>
<evidence type="ECO:0007829" key="13">
    <source>
        <dbReference type="PDB" id="4AYB"/>
    </source>
</evidence>
<keyword id="KW-0002">3D-structure</keyword>
<keyword id="KW-0963">Cytoplasm</keyword>
<keyword id="KW-0240">DNA-directed RNA polymerase</keyword>
<keyword id="KW-0548">Nucleotidyltransferase</keyword>
<keyword id="KW-0804">Transcription</keyword>
<keyword id="KW-0808">Transferase</keyword>
<accession>B8YB62</accession>
<accession>A0A8F5BS14</accession>
<feature type="chain" id="PRO_0000453878" description="DNA-directed RNA polymerase subunit Rpo11">
    <location>
        <begin position="1"/>
        <end position="92"/>
    </location>
</feature>
<feature type="strand" evidence="13">
    <location>
        <begin position="5"/>
        <end position="8"/>
    </location>
</feature>
<feature type="strand" evidence="13">
    <location>
        <begin position="10"/>
        <end position="19"/>
    </location>
</feature>
<feature type="helix" evidence="13">
    <location>
        <begin position="22"/>
        <end position="32"/>
    </location>
</feature>
<feature type="strand" evidence="12">
    <location>
        <begin position="33"/>
        <end position="35"/>
    </location>
</feature>
<feature type="strand" evidence="13">
    <location>
        <begin position="40"/>
        <end position="44"/>
    </location>
</feature>
<feature type="strand" evidence="13">
    <location>
        <begin position="52"/>
        <end position="58"/>
    </location>
</feature>
<feature type="strand" evidence="13">
    <location>
        <begin position="61"/>
        <end position="63"/>
    </location>
</feature>
<feature type="helix" evidence="13">
    <location>
        <begin position="65"/>
        <end position="88"/>
    </location>
</feature>